<evidence type="ECO:0000255" key="1">
    <source>
        <dbReference type="HAMAP-Rule" id="MF_01825"/>
    </source>
</evidence>
<reference key="1">
    <citation type="journal article" date="2004" name="Nat. Genet.">
        <title>Evidence in the Legionella pneumophila genome for exploitation of host cell functions and high genome plasticity.</title>
        <authorList>
            <person name="Cazalet C."/>
            <person name="Rusniok C."/>
            <person name="Brueggemann H."/>
            <person name="Zidane N."/>
            <person name="Magnier A."/>
            <person name="Ma L."/>
            <person name="Tichit M."/>
            <person name="Jarraud S."/>
            <person name="Bouchier C."/>
            <person name="Vandenesch F."/>
            <person name="Kunst F."/>
            <person name="Etienne J."/>
            <person name="Glaser P."/>
            <person name="Buchrieser C."/>
        </authorList>
    </citation>
    <scope>NUCLEOTIDE SEQUENCE [LARGE SCALE GENOMIC DNA]</scope>
    <source>
        <strain>Lens</strain>
    </source>
</reference>
<name>PDXB_LEGPL</name>
<comment type="function">
    <text evidence="1">Catalyzes the oxidation of erythronate-4-phosphate to 3-hydroxy-2-oxo-4-phosphonooxybutanoate.</text>
</comment>
<comment type="catalytic activity">
    <reaction evidence="1">
        <text>4-phospho-D-erythronate + NAD(+) = (R)-3-hydroxy-2-oxo-4-phosphooxybutanoate + NADH + H(+)</text>
        <dbReference type="Rhea" id="RHEA:18829"/>
        <dbReference type="ChEBI" id="CHEBI:15378"/>
        <dbReference type="ChEBI" id="CHEBI:57540"/>
        <dbReference type="ChEBI" id="CHEBI:57945"/>
        <dbReference type="ChEBI" id="CHEBI:58538"/>
        <dbReference type="ChEBI" id="CHEBI:58766"/>
        <dbReference type="EC" id="1.1.1.290"/>
    </reaction>
</comment>
<comment type="pathway">
    <text evidence="1">Cofactor biosynthesis; pyridoxine 5'-phosphate biosynthesis; pyridoxine 5'-phosphate from D-erythrose 4-phosphate: step 2/5.</text>
</comment>
<comment type="subunit">
    <text evidence="1">Homodimer.</text>
</comment>
<comment type="subcellular location">
    <subcellularLocation>
        <location evidence="1">Cytoplasm</location>
    </subcellularLocation>
</comment>
<comment type="similarity">
    <text evidence="1">Belongs to the D-isomer specific 2-hydroxyacid dehydrogenase family. PdxB subfamily.</text>
</comment>
<dbReference type="EC" id="1.1.1.290" evidence="1"/>
<dbReference type="EMBL" id="CR628337">
    <property type="protein sequence ID" value="CAH15183.1"/>
    <property type="molecule type" value="Genomic_DNA"/>
</dbReference>
<dbReference type="RefSeq" id="WP_011215087.1">
    <property type="nucleotide sequence ID" value="NC_006369.1"/>
</dbReference>
<dbReference type="SMR" id="Q5WXZ0"/>
<dbReference type="KEGG" id="lpf:lpl0949"/>
<dbReference type="LegioList" id="lpl0949"/>
<dbReference type="HOGENOM" id="CLU_019796_4_0_6"/>
<dbReference type="UniPathway" id="UPA00244">
    <property type="reaction ID" value="UER00310"/>
</dbReference>
<dbReference type="Proteomes" id="UP000002517">
    <property type="component" value="Chromosome"/>
</dbReference>
<dbReference type="GO" id="GO:0005829">
    <property type="term" value="C:cytosol"/>
    <property type="evidence" value="ECO:0007669"/>
    <property type="project" value="TreeGrafter"/>
</dbReference>
<dbReference type="GO" id="GO:0033711">
    <property type="term" value="F:4-phosphoerythronate dehydrogenase activity"/>
    <property type="evidence" value="ECO:0007669"/>
    <property type="project" value="UniProtKB-EC"/>
</dbReference>
<dbReference type="GO" id="GO:0030267">
    <property type="term" value="F:glyoxylate reductase (NADPH) activity"/>
    <property type="evidence" value="ECO:0007669"/>
    <property type="project" value="TreeGrafter"/>
</dbReference>
<dbReference type="GO" id="GO:0016618">
    <property type="term" value="F:hydroxypyruvate reductase [NAD(P)H] activity"/>
    <property type="evidence" value="ECO:0007669"/>
    <property type="project" value="TreeGrafter"/>
</dbReference>
<dbReference type="GO" id="GO:0051287">
    <property type="term" value="F:NAD binding"/>
    <property type="evidence" value="ECO:0007669"/>
    <property type="project" value="InterPro"/>
</dbReference>
<dbReference type="GO" id="GO:0008615">
    <property type="term" value="P:pyridoxine biosynthetic process"/>
    <property type="evidence" value="ECO:0007669"/>
    <property type="project" value="UniProtKB-UniRule"/>
</dbReference>
<dbReference type="CDD" id="cd12158">
    <property type="entry name" value="ErythrP_dh"/>
    <property type="match status" value="1"/>
</dbReference>
<dbReference type="Gene3D" id="3.40.50.720">
    <property type="entry name" value="NAD(P)-binding Rossmann-like Domain"/>
    <property type="match status" value="2"/>
</dbReference>
<dbReference type="HAMAP" id="MF_01825">
    <property type="entry name" value="PdxB"/>
    <property type="match status" value="1"/>
</dbReference>
<dbReference type="InterPro" id="IPR050223">
    <property type="entry name" value="D-isomer_2-hydroxyacid_DH"/>
</dbReference>
<dbReference type="InterPro" id="IPR006139">
    <property type="entry name" value="D-isomer_2_OHA_DH_cat_dom"/>
</dbReference>
<dbReference type="InterPro" id="IPR029753">
    <property type="entry name" value="D-isomer_DH_CS"/>
</dbReference>
<dbReference type="InterPro" id="IPR029752">
    <property type="entry name" value="D-isomer_DH_CS1"/>
</dbReference>
<dbReference type="InterPro" id="IPR006140">
    <property type="entry name" value="D-isomer_DH_NAD-bd"/>
</dbReference>
<dbReference type="InterPro" id="IPR020921">
    <property type="entry name" value="Erythronate-4-P_DHase"/>
</dbReference>
<dbReference type="InterPro" id="IPR036291">
    <property type="entry name" value="NAD(P)-bd_dom_sf"/>
</dbReference>
<dbReference type="PANTHER" id="PTHR10996:SF178">
    <property type="entry name" value="2-HYDROXYACID DEHYDROGENASE YGL185C-RELATED"/>
    <property type="match status" value="1"/>
</dbReference>
<dbReference type="PANTHER" id="PTHR10996">
    <property type="entry name" value="2-HYDROXYACID DEHYDROGENASE-RELATED"/>
    <property type="match status" value="1"/>
</dbReference>
<dbReference type="Pfam" id="PF00389">
    <property type="entry name" value="2-Hacid_dh"/>
    <property type="match status" value="1"/>
</dbReference>
<dbReference type="Pfam" id="PF02826">
    <property type="entry name" value="2-Hacid_dh_C"/>
    <property type="match status" value="1"/>
</dbReference>
<dbReference type="SUPFAM" id="SSF52283">
    <property type="entry name" value="Formate/glycerate dehydrogenase catalytic domain-like"/>
    <property type="match status" value="1"/>
</dbReference>
<dbReference type="SUPFAM" id="SSF51735">
    <property type="entry name" value="NAD(P)-binding Rossmann-fold domains"/>
    <property type="match status" value="1"/>
</dbReference>
<dbReference type="PROSITE" id="PS00065">
    <property type="entry name" value="D_2_HYDROXYACID_DH_1"/>
    <property type="match status" value="1"/>
</dbReference>
<dbReference type="PROSITE" id="PS00671">
    <property type="entry name" value="D_2_HYDROXYACID_DH_3"/>
    <property type="match status" value="1"/>
</dbReference>
<gene>
    <name evidence="1" type="primary">pdxB</name>
    <name type="ordered locus">lpl0949</name>
</gene>
<protein>
    <recommendedName>
        <fullName evidence="1">Erythronate-4-phosphate dehydrogenase</fullName>
        <ecNumber evidence="1">1.1.1.290</ecNumber>
    </recommendedName>
</protein>
<accession>Q5WXZ0</accession>
<sequence>MNILADALLPGLDSAFPPPFTVTLYHKADEIPELLHHKDVLLCRSTLKINGDLLKHHQIKVVATATSGTDHIDFPFLESQNISIIDAKGCNATSVADYVVACLAYLDKQQLIQGKTAGIIGLGQVGTKVYERLNAAEFQLCLYDPPKATRDTSFQSCSLEDLLECDFLCVHAELHSNAPYPSLNLINRDFLKELKPGCIIINASRGGIINEEALLHLGSAILYCTDVYNNEPHIDNRIVSRATLCTPHIAGHSLEAKFAAVAIVSRKLHQMLGLPYPQFATPEKPYRLNDDSNWRELALSIYNPIHETLELKHAGNLSSAFLTLRKNHHHRHDFTTYFDSDSIKKYPLLG</sequence>
<feature type="chain" id="PRO_0000297444" description="Erythronate-4-phosphate dehydrogenase">
    <location>
        <begin position="1"/>
        <end position="350"/>
    </location>
</feature>
<feature type="active site" evidence="1">
    <location>
        <position position="205"/>
    </location>
</feature>
<feature type="active site" evidence="1">
    <location>
        <position position="231"/>
    </location>
</feature>
<feature type="active site" description="Proton donor" evidence="1">
    <location>
        <position position="248"/>
    </location>
</feature>
<feature type="binding site" evidence="1">
    <location>
        <position position="45"/>
    </location>
    <ligand>
        <name>substrate</name>
    </ligand>
</feature>
<feature type="binding site" evidence="1">
    <location>
        <position position="66"/>
    </location>
    <ligand>
        <name>substrate</name>
    </ligand>
</feature>
<feature type="binding site" evidence="1">
    <location>
        <begin position="124"/>
        <end position="125"/>
    </location>
    <ligand>
        <name>NAD(+)</name>
        <dbReference type="ChEBI" id="CHEBI:57540"/>
    </ligand>
</feature>
<feature type="binding site" evidence="1">
    <location>
        <position position="144"/>
    </location>
    <ligand>
        <name>NAD(+)</name>
        <dbReference type="ChEBI" id="CHEBI:57540"/>
    </ligand>
</feature>
<feature type="binding site" evidence="1">
    <location>
        <begin position="203"/>
        <end position="205"/>
    </location>
    <ligand>
        <name>NAD(+)</name>
        <dbReference type="ChEBI" id="CHEBI:57540"/>
    </ligand>
</feature>
<feature type="binding site" evidence="1">
    <location>
        <position position="226"/>
    </location>
    <ligand>
        <name>NAD(+)</name>
        <dbReference type="ChEBI" id="CHEBI:57540"/>
    </ligand>
</feature>
<feature type="binding site" evidence="1">
    <location>
        <position position="251"/>
    </location>
    <ligand>
        <name>NAD(+)</name>
        <dbReference type="ChEBI" id="CHEBI:57540"/>
    </ligand>
</feature>
<proteinExistence type="inferred from homology"/>
<organism>
    <name type="scientific">Legionella pneumophila (strain Lens)</name>
    <dbReference type="NCBI Taxonomy" id="297245"/>
    <lineage>
        <taxon>Bacteria</taxon>
        <taxon>Pseudomonadati</taxon>
        <taxon>Pseudomonadota</taxon>
        <taxon>Gammaproteobacteria</taxon>
        <taxon>Legionellales</taxon>
        <taxon>Legionellaceae</taxon>
        <taxon>Legionella</taxon>
    </lineage>
</organism>
<keyword id="KW-0963">Cytoplasm</keyword>
<keyword id="KW-0520">NAD</keyword>
<keyword id="KW-0560">Oxidoreductase</keyword>
<keyword id="KW-0664">Pyridoxine biosynthesis</keyword>